<dbReference type="EC" id="6.1.1.4" evidence="1"/>
<dbReference type="EMBL" id="CP000627">
    <property type="protein sequence ID" value="ABQ20041.1"/>
    <property type="status" value="ALT_INIT"/>
    <property type="molecule type" value="Genomic_DNA"/>
</dbReference>
<dbReference type="EMBL" id="CP001235">
    <property type="protein sequence ID" value="ACP08983.1"/>
    <property type="status" value="ALT_INIT"/>
    <property type="molecule type" value="Genomic_DNA"/>
</dbReference>
<dbReference type="RefSeq" id="WP_001157869.1">
    <property type="nucleotide sequence ID" value="NZ_JAACZH010000005.1"/>
</dbReference>
<dbReference type="SMR" id="A5F2X0"/>
<dbReference type="KEGG" id="vco:VC0395_A0478"/>
<dbReference type="KEGG" id="vcr:VC395_0971"/>
<dbReference type="PATRIC" id="fig|345073.21.peg.941"/>
<dbReference type="eggNOG" id="COG0495">
    <property type="taxonomic scope" value="Bacteria"/>
</dbReference>
<dbReference type="HOGENOM" id="CLU_004427_0_0_6"/>
<dbReference type="OrthoDB" id="9810365at2"/>
<dbReference type="Proteomes" id="UP000000249">
    <property type="component" value="Chromosome 2"/>
</dbReference>
<dbReference type="GO" id="GO:0005829">
    <property type="term" value="C:cytosol"/>
    <property type="evidence" value="ECO:0007669"/>
    <property type="project" value="TreeGrafter"/>
</dbReference>
<dbReference type="GO" id="GO:0002161">
    <property type="term" value="F:aminoacyl-tRNA deacylase activity"/>
    <property type="evidence" value="ECO:0007669"/>
    <property type="project" value="InterPro"/>
</dbReference>
<dbReference type="GO" id="GO:0005524">
    <property type="term" value="F:ATP binding"/>
    <property type="evidence" value="ECO:0007669"/>
    <property type="project" value="UniProtKB-UniRule"/>
</dbReference>
<dbReference type="GO" id="GO:0004823">
    <property type="term" value="F:leucine-tRNA ligase activity"/>
    <property type="evidence" value="ECO:0007669"/>
    <property type="project" value="UniProtKB-UniRule"/>
</dbReference>
<dbReference type="GO" id="GO:0006429">
    <property type="term" value="P:leucyl-tRNA aminoacylation"/>
    <property type="evidence" value="ECO:0007669"/>
    <property type="project" value="UniProtKB-UniRule"/>
</dbReference>
<dbReference type="CDD" id="cd07958">
    <property type="entry name" value="Anticodon_Ia_Leu_BEm"/>
    <property type="match status" value="1"/>
</dbReference>
<dbReference type="CDD" id="cd00812">
    <property type="entry name" value="LeuRS_core"/>
    <property type="match status" value="1"/>
</dbReference>
<dbReference type="FunFam" id="1.10.730.10:FF:000003">
    <property type="entry name" value="Leucine--tRNA ligase"/>
    <property type="match status" value="1"/>
</dbReference>
<dbReference type="FunFam" id="2.20.28.290:FF:000001">
    <property type="entry name" value="Leucine--tRNA ligase"/>
    <property type="match status" value="1"/>
</dbReference>
<dbReference type="FunFam" id="3.10.20.590:FF:000001">
    <property type="entry name" value="Leucine--tRNA ligase"/>
    <property type="match status" value="1"/>
</dbReference>
<dbReference type="FunFam" id="3.40.50.620:FF:000003">
    <property type="entry name" value="Leucine--tRNA ligase"/>
    <property type="match status" value="1"/>
</dbReference>
<dbReference type="FunFam" id="3.40.50.620:FF:000051">
    <property type="entry name" value="Leucine--tRNA ligase"/>
    <property type="match status" value="1"/>
</dbReference>
<dbReference type="FunFam" id="3.90.740.10:FF:000012">
    <property type="entry name" value="Leucine--tRNA ligase"/>
    <property type="match status" value="1"/>
</dbReference>
<dbReference type="Gene3D" id="2.20.28.290">
    <property type="match status" value="1"/>
</dbReference>
<dbReference type="Gene3D" id="3.10.20.590">
    <property type="match status" value="1"/>
</dbReference>
<dbReference type="Gene3D" id="3.40.50.620">
    <property type="entry name" value="HUPs"/>
    <property type="match status" value="2"/>
</dbReference>
<dbReference type="Gene3D" id="1.10.730.10">
    <property type="entry name" value="Isoleucyl-tRNA Synthetase, Domain 1"/>
    <property type="match status" value="2"/>
</dbReference>
<dbReference type="HAMAP" id="MF_00049_B">
    <property type="entry name" value="Leu_tRNA_synth_B"/>
    <property type="match status" value="1"/>
</dbReference>
<dbReference type="InterPro" id="IPR001412">
    <property type="entry name" value="aa-tRNA-synth_I_CS"/>
</dbReference>
<dbReference type="InterPro" id="IPR002300">
    <property type="entry name" value="aa-tRNA-synth_Ia"/>
</dbReference>
<dbReference type="InterPro" id="IPR002302">
    <property type="entry name" value="Leu-tRNA-ligase"/>
</dbReference>
<dbReference type="InterPro" id="IPR025709">
    <property type="entry name" value="Leu_tRNA-synth_edit"/>
</dbReference>
<dbReference type="InterPro" id="IPR013155">
    <property type="entry name" value="M/V/L/I-tRNA-synth_anticd-bd"/>
</dbReference>
<dbReference type="InterPro" id="IPR015413">
    <property type="entry name" value="Methionyl/Leucyl_tRNA_Synth"/>
</dbReference>
<dbReference type="InterPro" id="IPR014729">
    <property type="entry name" value="Rossmann-like_a/b/a_fold"/>
</dbReference>
<dbReference type="InterPro" id="IPR009080">
    <property type="entry name" value="tRNAsynth_Ia_anticodon-bd"/>
</dbReference>
<dbReference type="InterPro" id="IPR009008">
    <property type="entry name" value="Val/Leu/Ile-tRNA-synth_edit"/>
</dbReference>
<dbReference type="NCBIfam" id="TIGR00396">
    <property type="entry name" value="leuS_bact"/>
    <property type="match status" value="1"/>
</dbReference>
<dbReference type="PANTHER" id="PTHR43740:SF2">
    <property type="entry name" value="LEUCINE--TRNA LIGASE, MITOCHONDRIAL"/>
    <property type="match status" value="1"/>
</dbReference>
<dbReference type="PANTHER" id="PTHR43740">
    <property type="entry name" value="LEUCYL-TRNA SYNTHETASE"/>
    <property type="match status" value="1"/>
</dbReference>
<dbReference type="Pfam" id="PF08264">
    <property type="entry name" value="Anticodon_1"/>
    <property type="match status" value="1"/>
</dbReference>
<dbReference type="Pfam" id="PF00133">
    <property type="entry name" value="tRNA-synt_1"/>
    <property type="match status" value="2"/>
</dbReference>
<dbReference type="Pfam" id="PF13603">
    <property type="entry name" value="tRNA-synt_1_2"/>
    <property type="match status" value="1"/>
</dbReference>
<dbReference type="Pfam" id="PF09334">
    <property type="entry name" value="tRNA-synt_1g"/>
    <property type="match status" value="1"/>
</dbReference>
<dbReference type="PRINTS" id="PR00985">
    <property type="entry name" value="TRNASYNTHLEU"/>
</dbReference>
<dbReference type="SUPFAM" id="SSF47323">
    <property type="entry name" value="Anticodon-binding domain of a subclass of class I aminoacyl-tRNA synthetases"/>
    <property type="match status" value="1"/>
</dbReference>
<dbReference type="SUPFAM" id="SSF52374">
    <property type="entry name" value="Nucleotidylyl transferase"/>
    <property type="match status" value="1"/>
</dbReference>
<dbReference type="SUPFAM" id="SSF50677">
    <property type="entry name" value="ValRS/IleRS/LeuRS editing domain"/>
    <property type="match status" value="1"/>
</dbReference>
<dbReference type="PROSITE" id="PS00178">
    <property type="entry name" value="AA_TRNA_LIGASE_I"/>
    <property type="match status" value="1"/>
</dbReference>
<gene>
    <name evidence="1" type="primary">leuS</name>
    <name type="ordered locus">VC0395_A0478</name>
    <name type="ordered locus">VC395_0971</name>
</gene>
<reference key="1">
    <citation type="submission" date="2007-03" db="EMBL/GenBank/DDBJ databases">
        <authorList>
            <person name="Heidelberg J."/>
        </authorList>
    </citation>
    <scope>NUCLEOTIDE SEQUENCE [LARGE SCALE GENOMIC DNA]</scope>
    <source>
        <strain>ATCC 39541 / Classical Ogawa 395 / O395</strain>
    </source>
</reference>
<reference key="2">
    <citation type="journal article" date="2008" name="PLoS ONE">
        <title>A recalibrated molecular clock and independent origins for the cholera pandemic clones.</title>
        <authorList>
            <person name="Feng L."/>
            <person name="Reeves P.R."/>
            <person name="Lan R."/>
            <person name="Ren Y."/>
            <person name="Gao C."/>
            <person name="Zhou Z."/>
            <person name="Ren Y."/>
            <person name="Cheng J."/>
            <person name="Wang W."/>
            <person name="Wang J."/>
            <person name="Qian W."/>
            <person name="Li D."/>
            <person name="Wang L."/>
        </authorList>
    </citation>
    <scope>NUCLEOTIDE SEQUENCE [LARGE SCALE GENOMIC DNA]</scope>
    <source>
        <strain>ATCC 39541 / Classical Ogawa 395 / O395</strain>
    </source>
</reference>
<feature type="chain" id="PRO_0000334836" description="Leucine--tRNA ligase">
    <location>
        <begin position="1"/>
        <end position="858"/>
    </location>
</feature>
<feature type="short sequence motif" description="'HIGH' region">
    <location>
        <begin position="42"/>
        <end position="52"/>
    </location>
</feature>
<feature type="short sequence motif" description="'KMSKS' region">
    <location>
        <begin position="618"/>
        <end position="622"/>
    </location>
</feature>
<feature type="binding site" evidence="1">
    <location>
        <position position="621"/>
    </location>
    <ligand>
        <name>ATP</name>
        <dbReference type="ChEBI" id="CHEBI:30616"/>
    </ligand>
</feature>
<sequence>MQEQYNPQDIEHKVQQHWDNNKTFVVSEDPNKEKFYCLSMFPYPSGRLHMGHVRNYTIGDVVSRFQRLQGKNVLQPIGWDAFGLPAENAAVKNNTAPAPWTYENIEYMKNQLKLLGFGYDWNREFATCRPEYYRWEQEFFTKLFAKGLVYKKTSSVNWCPNDQTVLANEQVEDGCCWRCDTPVEQKEIPQWFIKITAYAQELLDDLDNLDGWPEMVKTMQRNWIGRSEGVELKFAVKGENTDLEVYTTRPDTLMGVTYVGIAAGHPLATKAAANNPALAAFIDECKNTKVAEAEIATMEKKGMATGLTAIHPLNGREVPIYIANFVLMDYGTGAVMAVPAHDQRDFEFATKYGLDIIPVIKPADGSELDVSEAAYTEKGVLFASGEFDGLDFQAAFNAIAAKLEAEGKGKKTVNFRLRDWGVSRQRYWGAPIPMVTTEDGQVHPVPADQLPVILPEDVVMDGVTSPIKADKEWAKTTFNGEPALRETDTFDTFMESSWYYARYCSPQADDILDPEKANYWLPVDQYIGGIEHACMHLLYSRFFYKLLRDAGYVKSDEPFKKLLCQGMVLADAFYYTNDKGGKEWVSPTEVKVERDGKGRIVSAVDATGRQVEHSGMIKMSKSKNNGIDPQEMVDKYGADTVRLFMMFASPADMTLEWQESGVEGANRFLRRVWKLVREHTELGQAPALDASALNADQKALRRDVHKTIAKVTDDVARRQTFNTAIAAIMELMNKLTKAPMTEAQDRAILDEALKAITLMLYPITPHICFEMWVALGQSNIDTASWPTYDEAALVEDEKLIVLQVNGKLRGKLTVAADATQQQVEALGMQDENVQKFIDGLTVRKVIYVPGKLLNIVAN</sequence>
<organism>
    <name type="scientific">Vibrio cholerae serotype O1 (strain ATCC 39541 / Classical Ogawa 395 / O395)</name>
    <dbReference type="NCBI Taxonomy" id="345073"/>
    <lineage>
        <taxon>Bacteria</taxon>
        <taxon>Pseudomonadati</taxon>
        <taxon>Pseudomonadota</taxon>
        <taxon>Gammaproteobacteria</taxon>
        <taxon>Vibrionales</taxon>
        <taxon>Vibrionaceae</taxon>
        <taxon>Vibrio</taxon>
    </lineage>
</organism>
<comment type="catalytic activity">
    <reaction evidence="1">
        <text>tRNA(Leu) + L-leucine + ATP = L-leucyl-tRNA(Leu) + AMP + diphosphate</text>
        <dbReference type="Rhea" id="RHEA:11688"/>
        <dbReference type="Rhea" id="RHEA-COMP:9613"/>
        <dbReference type="Rhea" id="RHEA-COMP:9622"/>
        <dbReference type="ChEBI" id="CHEBI:30616"/>
        <dbReference type="ChEBI" id="CHEBI:33019"/>
        <dbReference type="ChEBI" id="CHEBI:57427"/>
        <dbReference type="ChEBI" id="CHEBI:78442"/>
        <dbReference type="ChEBI" id="CHEBI:78494"/>
        <dbReference type="ChEBI" id="CHEBI:456215"/>
        <dbReference type="EC" id="6.1.1.4"/>
    </reaction>
</comment>
<comment type="subcellular location">
    <subcellularLocation>
        <location evidence="1">Cytoplasm</location>
    </subcellularLocation>
</comment>
<comment type="similarity">
    <text evidence="1">Belongs to the class-I aminoacyl-tRNA synthetase family.</text>
</comment>
<comment type="sequence caution" evidence="2">
    <conflict type="erroneous initiation">
        <sequence resource="EMBL-CDS" id="ABQ20041"/>
    </conflict>
</comment>
<comment type="sequence caution" evidence="2">
    <conflict type="erroneous initiation">
        <sequence resource="EMBL-CDS" id="ACP08983"/>
    </conflict>
</comment>
<accession>A5F2X0</accession>
<accession>C3LYW7</accession>
<protein>
    <recommendedName>
        <fullName evidence="1">Leucine--tRNA ligase</fullName>
        <ecNumber evidence="1">6.1.1.4</ecNumber>
    </recommendedName>
    <alternativeName>
        <fullName evidence="1">Leucyl-tRNA synthetase</fullName>
        <shortName evidence="1">LeuRS</shortName>
    </alternativeName>
</protein>
<proteinExistence type="inferred from homology"/>
<keyword id="KW-0030">Aminoacyl-tRNA synthetase</keyword>
<keyword id="KW-0067">ATP-binding</keyword>
<keyword id="KW-0963">Cytoplasm</keyword>
<keyword id="KW-0436">Ligase</keyword>
<keyword id="KW-0547">Nucleotide-binding</keyword>
<keyword id="KW-0648">Protein biosynthesis</keyword>
<evidence type="ECO:0000255" key="1">
    <source>
        <dbReference type="HAMAP-Rule" id="MF_00049"/>
    </source>
</evidence>
<evidence type="ECO:0000305" key="2"/>
<name>SYL_VIBC3</name>